<organism>
    <name type="scientific">Cupriavidus necator (strain ATCC 17699 / DSM 428 / KCTC 22496 / NCIMB 10442 / H16 / Stanier 337)</name>
    <name type="common">Ralstonia eutropha</name>
    <dbReference type="NCBI Taxonomy" id="381666"/>
    <lineage>
        <taxon>Bacteria</taxon>
        <taxon>Pseudomonadati</taxon>
        <taxon>Pseudomonadota</taxon>
        <taxon>Betaproteobacteria</taxon>
        <taxon>Burkholderiales</taxon>
        <taxon>Burkholderiaceae</taxon>
        <taxon>Cupriavidus</taxon>
    </lineage>
</organism>
<sequence length="322" mass="34780">MSRLFLAPMEGLADYVLRDVLTDTGGYDGCVSEFVRVTGSLLPARVYERETPEILAGGYTRSGTPMVIQLLGSDPEWLARNAAYAATLSPHGIDLNFGCPAKVVNRHGGGAMLLTNPELLNRIVASVRAAVPAHIAVTAKMRLGVSDASLAIDCATALAEGGAASLVVHARTRDHGYRPPAHWDWIARIAAAVDVPVIANGDVWTVADWERCRAVSGCADVMIGRGAVSDPFLALRIRGLMDGSPSDQEWPLVLRQIATYLKKLHARIASCHEHGRVKLWLSYLKRTWPQAAELHAAIRRMQDSLEIERVLEGLPGAATAPE</sequence>
<proteinExistence type="inferred from homology"/>
<evidence type="ECO:0000255" key="1">
    <source>
        <dbReference type="HAMAP-Rule" id="MF_02043"/>
    </source>
</evidence>
<evidence type="ECO:0000305" key="2"/>
<comment type="function">
    <text evidence="1">Catalyzes the synthesis of 5,6-dihydrouridine (D), a modified base found in the D-loop of most tRNAs, via the reduction of the C5-C6 double bond in target uridines. Specifically modifies U16 in tRNAs.</text>
</comment>
<comment type="catalytic activity">
    <reaction evidence="1">
        <text>5,6-dihydrouridine(16) in tRNA + NADP(+) = uridine(16) in tRNA + NADPH + H(+)</text>
        <dbReference type="Rhea" id="RHEA:53376"/>
        <dbReference type="Rhea" id="RHEA-COMP:13543"/>
        <dbReference type="Rhea" id="RHEA-COMP:13544"/>
        <dbReference type="ChEBI" id="CHEBI:15378"/>
        <dbReference type="ChEBI" id="CHEBI:57783"/>
        <dbReference type="ChEBI" id="CHEBI:58349"/>
        <dbReference type="ChEBI" id="CHEBI:65315"/>
        <dbReference type="ChEBI" id="CHEBI:74443"/>
    </reaction>
</comment>
<comment type="catalytic activity">
    <reaction evidence="1">
        <text>5,6-dihydrouridine(16) in tRNA + NAD(+) = uridine(16) in tRNA + NADH + H(+)</text>
        <dbReference type="Rhea" id="RHEA:53380"/>
        <dbReference type="Rhea" id="RHEA-COMP:13543"/>
        <dbReference type="Rhea" id="RHEA-COMP:13544"/>
        <dbReference type="ChEBI" id="CHEBI:15378"/>
        <dbReference type="ChEBI" id="CHEBI:57540"/>
        <dbReference type="ChEBI" id="CHEBI:57945"/>
        <dbReference type="ChEBI" id="CHEBI:65315"/>
        <dbReference type="ChEBI" id="CHEBI:74443"/>
    </reaction>
</comment>
<comment type="cofactor">
    <cofactor evidence="1">
        <name>FMN</name>
        <dbReference type="ChEBI" id="CHEBI:58210"/>
    </cofactor>
</comment>
<comment type="similarity">
    <text evidence="1">Belongs to the Dus family. DusC subfamily.</text>
</comment>
<dbReference type="EC" id="1.3.1.-" evidence="1"/>
<dbReference type="EMBL" id="AF026544">
    <property type="protein sequence ID" value="AAC38320.1"/>
    <property type="molecule type" value="Genomic_DNA"/>
</dbReference>
<dbReference type="EMBL" id="AM260479">
    <property type="protein sequence ID" value="CAJ92578.1"/>
    <property type="molecule type" value="Genomic_DNA"/>
</dbReference>
<dbReference type="RefSeq" id="WP_011615087.1">
    <property type="nucleotide sequence ID" value="NC_008313.1"/>
</dbReference>
<dbReference type="SMR" id="O68273"/>
<dbReference type="STRING" id="381666.H16_A1443"/>
<dbReference type="KEGG" id="reh:H16_A1443"/>
<dbReference type="PATRIC" id="fig|381666.6.peg.1832"/>
<dbReference type="eggNOG" id="COG0042">
    <property type="taxonomic scope" value="Bacteria"/>
</dbReference>
<dbReference type="HOGENOM" id="CLU_013299_0_4_4"/>
<dbReference type="OrthoDB" id="5289281at2"/>
<dbReference type="Proteomes" id="UP000008210">
    <property type="component" value="Chromosome 1"/>
</dbReference>
<dbReference type="GO" id="GO:0050660">
    <property type="term" value="F:flavin adenine dinucleotide binding"/>
    <property type="evidence" value="ECO:0007669"/>
    <property type="project" value="InterPro"/>
</dbReference>
<dbReference type="GO" id="GO:0010181">
    <property type="term" value="F:FMN binding"/>
    <property type="evidence" value="ECO:0007669"/>
    <property type="project" value="UniProtKB-UniRule"/>
</dbReference>
<dbReference type="GO" id="GO:0000049">
    <property type="term" value="F:tRNA binding"/>
    <property type="evidence" value="ECO:0007669"/>
    <property type="project" value="UniProtKB-UniRule"/>
</dbReference>
<dbReference type="GO" id="GO:0102262">
    <property type="term" value="F:tRNA-dihydrouridine16 synthase activity"/>
    <property type="evidence" value="ECO:0007669"/>
    <property type="project" value="RHEA"/>
</dbReference>
<dbReference type="CDD" id="cd02801">
    <property type="entry name" value="DUS_like_FMN"/>
    <property type="match status" value="1"/>
</dbReference>
<dbReference type="Gene3D" id="3.20.20.70">
    <property type="entry name" value="Aldolase class I"/>
    <property type="match status" value="1"/>
</dbReference>
<dbReference type="Gene3D" id="1.20.225.30">
    <property type="entry name" value="Dihydrouridine synthase, C-terminal recognition domain"/>
    <property type="match status" value="1"/>
</dbReference>
<dbReference type="HAMAP" id="MF_02043">
    <property type="entry name" value="DusC_subfam"/>
    <property type="match status" value="1"/>
</dbReference>
<dbReference type="InterPro" id="IPR013785">
    <property type="entry name" value="Aldolase_TIM"/>
</dbReference>
<dbReference type="InterPro" id="IPR035587">
    <property type="entry name" value="DUS-like_FMN-bd"/>
</dbReference>
<dbReference type="InterPro" id="IPR001269">
    <property type="entry name" value="DUS_fam"/>
</dbReference>
<dbReference type="InterPro" id="IPR032886">
    <property type="entry name" value="DusC"/>
</dbReference>
<dbReference type="InterPro" id="IPR042270">
    <property type="entry name" value="DusC_C"/>
</dbReference>
<dbReference type="InterPro" id="IPR018517">
    <property type="entry name" value="tRNA_hU_synthase_CS"/>
</dbReference>
<dbReference type="PANTHER" id="PTHR45846">
    <property type="entry name" value="TRNA-DIHYDROURIDINE(47) SYNTHASE [NAD(P)(+)]-LIKE"/>
    <property type="match status" value="1"/>
</dbReference>
<dbReference type="PANTHER" id="PTHR45846:SF1">
    <property type="entry name" value="TRNA-DIHYDROURIDINE(47) SYNTHASE [NAD(P)(+)]-LIKE"/>
    <property type="match status" value="1"/>
</dbReference>
<dbReference type="Pfam" id="PF01207">
    <property type="entry name" value="Dus"/>
    <property type="match status" value="1"/>
</dbReference>
<dbReference type="PIRSF" id="PIRSF006621">
    <property type="entry name" value="Dus"/>
    <property type="match status" value="1"/>
</dbReference>
<dbReference type="SUPFAM" id="SSF51395">
    <property type="entry name" value="FMN-linked oxidoreductases"/>
    <property type="match status" value="1"/>
</dbReference>
<dbReference type="PROSITE" id="PS01136">
    <property type="entry name" value="UPF0034"/>
    <property type="match status" value="1"/>
</dbReference>
<reference key="1">
    <citation type="journal article" date="1998" name="J. Bacteriol.">
        <title>Multiple beta-ketothiolases mediate poly(beta-hydroxyalkanoate) copolymer synthesis in Ralstonia eutropha.</title>
        <authorList>
            <person name="Slater S."/>
            <person name="Houmiel K.L."/>
            <person name="Tran M."/>
            <person name="Mitsky T.A."/>
            <person name="Taylor N.B."/>
            <person name="Padgette S.R."/>
            <person name="Gruys K.J."/>
        </authorList>
    </citation>
    <scope>NUCLEOTIDE SEQUENCE [GENOMIC DNA]</scope>
</reference>
<reference key="2">
    <citation type="journal article" date="2006" name="Nat. Biotechnol.">
        <title>Genome sequence of the bioplastic-producing 'Knallgas' bacterium Ralstonia eutropha H16.</title>
        <authorList>
            <person name="Pohlmann A."/>
            <person name="Fricke W.F."/>
            <person name="Reinecke F."/>
            <person name="Kusian B."/>
            <person name="Liesegang H."/>
            <person name="Cramm R."/>
            <person name="Eitinger T."/>
            <person name="Ewering C."/>
            <person name="Poetter M."/>
            <person name="Schwartz E."/>
            <person name="Strittmatter A."/>
            <person name="Voss I."/>
            <person name="Gottschalk G."/>
            <person name="Steinbuechel A."/>
            <person name="Friedrich B."/>
            <person name="Bowien B."/>
        </authorList>
    </citation>
    <scope>NUCLEOTIDE SEQUENCE [LARGE SCALE GENOMIC DNA]</scope>
    <source>
        <strain>ATCC 17699 / DSM 428 / KCTC 22496 / NCIMB 10442 / H16 / Stanier 337</strain>
    </source>
</reference>
<accession>O68273</accession>
<accession>Q0KBP3</accession>
<gene>
    <name evidence="1" type="primary">dusC</name>
    <name type="ordered locus">H16_A1443</name>
</gene>
<name>DUSC_CUPNH</name>
<feature type="chain" id="PRO_0000162107" description="tRNA-dihydrouridine(16) synthase">
    <location>
        <begin position="1"/>
        <end position="322"/>
    </location>
</feature>
<feature type="active site" description="Proton donor" evidence="1">
    <location>
        <position position="99"/>
    </location>
</feature>
<feature type="binding site" evidence="1">
    <location>
        <begin position="8"/>
        <end position="10"/>
    </location>
    <ligand>
        <name>FMN</name>
        <dbReference type="ChEBI" id="CHEBI:58210"/>
    </ligand>
</feature>
<feature type="binding site" evidence="1">
    <location>
        <position position="69"/>
    </location>
    <ligand>
        <name>FMN</name>
        <dbReference type="ChEBI" id="CHEBI:58210"/>
    </ligand>
</feature>
<feature type="binding site" evidence="1">
    <location>
        <position position="140"/>
    </location>
    <ligand>
        <name>FMN</name>
        <dbReference type="ChEBI" id="CHEBI:58210"/>
    </ligand>
</feature>
<feature type="binding site" evidence="1">
    <location>
        <begin position="200"/>
        <end position="202"/>
    </location>
    <ligand>
        <name>FMN</name>
        <dbReference type="ChEBI" id="CHEBI:58210"/>
    </ligand>
</feature>
<feature type="binding site" evidence="1">
    <location>
        <begin position="224"/>
        <end position="225"/>
    </location>
    <ligand>
        <name>FMN</name>
        <dbReference type="ChEBI" id="CHEBI:58210"/>
    </ligand>
</feature>
<feature type="site" description="Interacts with tRNA; defines subfamily-specific binding signature" evidence="1">
    <location>
        <position position="36"/>
    </location>
</feature>
<feature type="site" description="Interacts with tRNA" evidence="1">
    <location>
        <position position="96"/>
    </location>
</feature>
<feature type="site" description="Interacts with tRNA" evidence="1">
    <location>
        <position position="177"/>
    </location>
</feature>
<feature type="site" description="Interacts with tRNA; defines subfamily-specific binding signature" evidence="1">
    <location>
        <position position="276"/>
    </location>
</feature>
<feature type="site" description="Interacts with tRNA; defines subfamily-specific binding signature" evidence="1">
    <location>
        <position position="278"/>
    </location>
</feature>
<feature type="site" description="Interacts with tRNA" evidence="1">
    <location>
        <position position="283"/>
    </location>
</feature>
<feature type="site" description="Interacts with tRNA; defines subfamily-specific binding signature" evidence="1">
    <location>
        <position position="299"/>
    </location>
</feature>
<feature type="sequence conflict" description="In Ref. 1; AAC38320." evidence="2" ref="1">
    <original>L</original>
    <variation>F</variation>
    <location>
        <position position="284"/>
    </location>
</feature>
<keyword id="KW-0285">Flavoprotein</keyword>
<keyword id="KW-0288">FMN</keyword>
<keyword id="KW-0521">NADP</keyword>
<keyword id="KW-0560">Oxidoreductase</keyword>
<keyword id="KW-1185">Reference proteome</keyword>
<keyword id="KW-0694">RNA-binding</keyword>
<keyword id="KW-0819">tRNA processing</keyword>
<keyword id="KW-0820">tRNA-binding</keyword>
<protein>
    <recommendedName>
        <fullName evidence="1">tRNA-dihydrouridine(16) synthase</fullName>
        <ecNumber evidence="1">1.3.1.-</ecNumber>
    </recommendedName>
    <alternativeName>
        <fullName evidence="1">U16-specific dihydrouridine synthase</fullName>
        <shortName evidence="1">U16-specific Dus</shortName>
    </alternativeName>
    <alternativeName>
        <fullName evidence="1">tRNA-dihydrouridine synthase C</fullName>
    </alternativeName>
</protein>